<dbReference type="EMBL" id="DS027052">
    <property type="protein sequence ID" value="EAW11239.1"/>
    <property type="molecule type" value="Genomic_DNA"/>
</dbReference>
<dbReference type="RefSeq" id="XP_001272665.1">
    <property type="nucleotide sequence ID" value="XM_001272664.1"/>
</dbReference>
<dbReference type="STRING" id="344612.A1CEE0"/>
<dbReference type="EnsemblFungi" id="EAW11239">
    <property type="protein sequence ID" value="EAW11239"/>
    <property type="gene ID" value="ACLA_089310"/>
</dbReference>
<dbReference type="GeneID" id="4705330"/>
<dbReference type="KEGG" id="act:ACLA_089310"/>
<dbReference type="VEuPathDB" id="FungiDB:ACLA_089310"/>
<dbReference type="eggNOG" id="KOG3572">
    <property type="taxonomic scope" value="Eukaryota"/>
</dbReference>
<dbReference type="HOGENOM" id="CLU_000935_1_1_1"/>
<dbReference type="OMA" id="SWMNATP"/>
<dbReference type="OrthoDB" id="39497at2759"/>
<dbReference type="Proteomes" id="UP000006701">
    <property type="component" value="Unassembled WGS sequence"/>
</dbReference>
<dbReference type="GO" id="GO:1990130">
    <property type="term" value="C:GATOR1 complex"/>
    <property type="evidence" value="ECO:0007669"/>
    <property type="project" value="TreeGrafter"/>
</dbReference>
<dbReference type="GO" id="GO:0005774">
    <property type="term" value="C:vacuolar membrane"/>
    <property type="evidence" value="ECO:0007669"/>
    <property type="project" value="UniProtKB-SubCell"/>
</dbReference>
<dbReference type="GO" id="GO:0005096">
    <property type="term" value="F:GTPase activator activity"/>
    <property type="evidence" value="ECO:0007669"/>
    <property type="project" value="InterPro"/>
</dbReference>
<dbReference type="GO" id="GO:0035556">
    <property type="term" value="P:intracellular signal transduction"/>
    <property type="evidence" value="ECO:0007669"/>
    <property type="project" value="InterPro"/>
</dbReference>
<dbReference type="GO" id="GO:1904262">
    <property type="term" value="P:negative regulation of TORC1 signaling"/>
    <property type="evidence" value="ECO:0007669"/>
    <property type="project" value="TreeGrafter"/>
</dbReference>
<dbReference type="GO" id="GO:0010508">
    <property type="term" value="P:positive regulation of autophagy"/>
    <property type="evidence" value="ECO:0007669"/>
    <property type="project" value="TreeGrafter"/>
</dbReference>
<dbReference type="CDD" id="cd04449">
    <property type="entry name" value="DEP_DEPDC5-like"/>
    <property type="match status" value="1"/>
</dbReference>
<dbReference type="FunFam" id="1.10.10.10:FF:001090">
    <property type="entry name" value="Vacuolar membrane-associated protein iml1"/>
    <property type="match status" value="1"/>
</dbReference>
<dbReference type="Gene3D" id="1.10.10.10">
    <property type="entry name" value="Winged helix-like DNA-binding domain superfamily/Winged helix DNA-binding domain"/>
    <property type="match status" value="1"/>
</dbReference>
<dbReference type="InterPro" id="IPR000591">
    <property type="entry name" value="DEP_dom"/>
</dbReference>
<dbReference type="InterPro" id="IPR045838">
    <property type="entry name" value="DEPDC5_CTD"/>
</dbReference>
<dbReference type="InterPro" id="IPR027244">
    <property type="entry name" value="IML1"/>
</dbReference>
<dbReference type="InterPro" id="IPR048255">
    <property type="entry name" value="IML1_N"/>
</dbReference>
<dbReference type="InterPro" id="IPR036388">
    <property type="entry name" value="WH-like_DNA-bd_sf"/>
</dbReference>
<dbReference type="InterPro" id="IPR036390">
    <property type="entry name" value="WH_DNA-bd_sf"/>
</dbReference>
<dbReference type="PANTHER" id="PTHR13179">
    <property type="entry name" value="DEP DOMAIN CONTAINING PROTEIN 5"/>
    <property type="match status" value="1"/>
</dbReference>
<dbReference type="PANTHER" id="PTHR13179:SF8">
    <property type="entry name" value="GATOR COMPLEX PROTEIN DEPDC5"/>
    <property type="match status" value="1"/>
</dbReference>
<dbReference type="Pfam" id="PF00610">
    <property type="entry name" value="DEP"/>
    <property type="match status" value="1"/>
</dbReference>
<dbReference type="Pfam" id="PF19418">
    <property type="entry name" value="DEPDC5_CTD"/>
    <property type="match status" value="1"/>
</dbReference>
<dbReference type="Pfam" id="PF12257">
    <property type="entry name" value="IML1"/>
    <property type="match status" value="1"/>
</dbReference>
<dbReference type="Pfam" id="PF24438">
    <property type="entry name" value="IML1_N_fung"/>
    <property type="match status" value="1"/>
</dbReference>
<dbReference type="SMART" id="SM00049">
    <property type="entry name" value="DEP"/>
    <property type="match status" value="1"/>
</dbReference>
<dbReference type="SUPFAM" id="SSF46785">
    <property type="entry name" value="Winged helix' DNA-binding domain"/>
    <property type="match status" value="1"/>
</dbReference>
<dbReference type="PROSITE" id="PS50186">
    <property type="entry name" value="DEP"/>
    <property type="match status" value="1"/>
</dbReference>
<organism>
    <name type="scientific">Aspergillus clavatus (strain ATCC 1007 / CBS 513.65 / DSM 816 / NCTC 3887 / NRRL 1 / QM 1276 / 107)</name>
    <dbReference type="NCBI Taxonomy" id="344612"/>
    <lineage>
        <taxon>Eukaryota</taxon>
        <taxon>Fungi</taxon>
        <taxon>Dikarya</taxon>
        <taxon>Ascomycota</taxon>
        <taxon>Pezizomycotina</taxon>
        <taxon>Eurotiomycetes</taxon>
        <taxon>Eurotiomycetidae</taxon>
        <taxon>Eurotiales</taxon>
        <taxon>Aspergillaceae</taxon>
        <taxon>Aspergillus</taxon>
        <taxon>Aspergillus subgen. Fumigati</taxon>
    </lineage>
</organism>
<sequence length="1845" mass="207178">MSLRGPMKRSHLRQVSAPSVDDLATSSQAQAQSHPRDGGPYNDEHGQDFQSTLDARNIRLSTTSLERRQVSLWVHDETFSREEILFNQAAFSDLGVGPGDVIEILPVRSPGDSLHSIKSDLGLRALRDSYVETGPALLPDPMSKFKTPLQSRCLFVVKPLPQEIKARHPKLEISVTSSVANIFGFKNRTLVHIDVVDRAQCSASHVDIAFRDQFLVRSDMWRLVMSELAEKIIYKGQKIVFMGSIKATVKNIFIREKKVLSGYFSPHTIPVFRSESAKYVLFIQMSREMWDFDSEGTGDILFSRVINGFLPELFKRWANSEAKHLVTIVLFTRVEYDVSAIGAPLPLSSETLRCISSPNHVPTRDFYRVVVNDMASGHWTAILDELKKDFRTFLRDVSTLKMDCADTPTLDGVKVAPKNKAATIAGRPSTALRGNILEAIHLASAHLAYDHIDRDMVHTGTSIIVITPGSGVFEVSYESLSSTSEALANRGIAIDLVCLSPMPLHSVPLFKYKAPAQRSSSSSFCEFNSSGYSPEMRHSFSFASRTPHLSPKSAAHGSFSRGTAHKEHAASRSDEWNYGIPHWLDISYWNPDTYREARRILKKDLNAPIPFTVTKQSKTFVPRVRMYEIQMMGVMESEQSNISIPYLLEGEGIHRAPSLSLGLSPSALSSTRASYRRNPYKLPLSDSLRPEPFLQGLSNPKDVMLARSKKAPKAVLAWMEQYDDAVFQPFAKRRHQRKPSKPKRLSEPDVQVSGAHERLSARSVLRLREHETNANSSERPYPTRTIPRVAETSLSAPQTPVPSKSASPKKPALKPPSAGKAPRISRTISFALRGLSATPPRALASTEVNVEHASALPTSSPKLLPGPFPDTRSVDSFSGSDSASISTVIDTSLRPASPHKTPQSRAIMPSRPISIKVPPRQPSEDAEPGDRAVIPESYSTTSTAIPFNEHHRRDSHTRTSGPRFEMTVNGGSRDSSIKSPQNKALAPWVRSINPCNTSREVLRDTSWFGRWQHAYPRPPHVAVVKWKSLKSPAILPLTTEEFPTAKELGTDYLQTPYRVFPNDDPEGFEVPKTRGILLREMISLRLSHGFQIVIGKHVAEVSGQHALETLNVFNTASLERNGATIFLSKGNSIHRLVCVDGGEIEVTRFTHRTSSALAAGRRDGFSLYSPAMRTILSPEYELKNIKLDPTAEEYNWNYADNYVAGHRDYLFNPAQQLQFWRVRYVLIPMHLHVNTRRHLQSFNEDNEEEIHLLGINQLTHIWQRHKYIPPEEKRFESSNKKKEQNPLNIMYQTRNPSEVVAAELDRILLSDPGLDSSPAQLLPESELLKRSSISLSSLAHIIQGDKGVRMMDRRWHWRLHYNCFIGFELTTWLLQNFRDIDSREEAVDFGNELMKHGLFQHVEKRHNFRDGNYFYQISSEHRISRPESRGGWFPQKRSDKGVPSTPASNNAKDSPLSGHARSDSLEDGPPHTPATPSKSKNKATIMLSKMMKYDVDPRKRSNRPEVIDLHYDRLHNPDNCFHFELSWMNTTPKLIEDTVLSWAATAEKFGLKLVQVPIAEASAISRTQPFRKPYRVSLKIPPPKGPVPTLFNTASFSQPGFTDMHYYHKAMLRKFDFVLDFEARSAFPADVGVSYSWGTPDYQYPQYIHRSGSTLVQLTDEGDFLFLANRLVSTRAAASREMPRYERMDRAEHLRTRAATHDPLDRLSPRLSPIVRPLHEIGSPQVQSSIDSAHLYRAPELIILGFAEFCNDEGRLEQFYKESHARPVSTKVGPATTTLMDSSIPSLELPASVVSHHLSHPPALVARASVDGSISSIDVRVRARNDSVSYKGSPRSGSLRPLNLS</sequence>
<evidence type="ECO:0000250" key="1"/>
<evidence type="ECO:0000255" key="2">
    <source>
        <dbReference type="PROSITE-ProRule" id="PRU00066"/>
    </source>
</evidence>
<evidence type="ECO:0000256" key="3">
    <source>
        <dbReference type="SAM" id="MobiDB-lite"/>
    </source>
</evidence>
<evidence type="ECO:0000305" key="4"/>
<protein>
    <recommendedName>
        <fullName>Vacuolar membrane-associated protein iml1</fullName>
    </recommendedName>
</protein>
<reference key="1">
    <citation type="journal article" date="2008" name="PLoS Genet.">
        <title>Genomic islands in the pathogenic filamentous fungus Aspergillus fumigatus.</title>
        <authorList>
            <person name="Fedorova N.D."/>
            <person name="Khaldi N."/>
            <person name="Joardar V.S."/>
            <person name="Maiti R."/>
            <person name="Amedeo P."/>
            <person name="Anderson M.J."/>
            <person name="Crabtree J."/>
            <person name="Silva J.C."/>
            <person name="Badger J.H."/>
            <person name="Albarraq A."/>
            <person name="Angiuoli S."/>
            <person name="Bussey H."/>
            <person name="Bowyer P."/>
            <person name="Cotty P.J."/>
            <person name="Dyer P.S."/>
            <person name="Egan A."/>
            <person name="Galens K."/>
            <person name="Fraser-Liggett C.M."/>
            <person name="Haas B.J."/>
            <person name="Inman J.M."/>
            <person name="Kent R."/>
            <person name="Lemieux S."/>
            <person name="Malavazi I."/>
            <person name="Orvis J."/>
            <person name="Roemer T."/>
            <person name="Ronning C.M."/>
            <person name="Sundaram J.P."/>
            <person name="Sutton G."/>
            <person name="Turner G."/>
            <person name="Venter J.C."/>
            <person name="White O.R."/>
            <person name="Whitty B.R."/>
            <person name="Youngman P."/>
            <person name="Wolfe K.H."/>
            <person name="Goldman G.H."/>
            <person name="Wortman J.R."/>
            <person name="Jiang B."/>
            <person name="Denning D.W."/>
            <person name="Nierman W.C."/>
        </authorList>
    </citation>
    <scope>NUCLEOTIDE SEQUENCE [LARGE SCALE GENOMIC DNA]</scope>
    <source>
        <strain>ATCC 1007 / CBS 513.65 / DSM 816 / NCTC 3887 / NRRL 1 / QM 1276 / 107</strain>
    </source>
</reference>
<proteinExistence type="inferred from homology"/>
<feature type="chain" id="PRO_0000301762" description="Vacuolar membrane-associated protein iml1">
    <location>
        <begin position="1"/>
        <end position="1845"/>
    </location>
</feature>
<feature type="domain" description="DEP" evidence="2">
    <location>
        <begin position="1344"/>
        <end position="1419"/>
    </location>
</feature>
<feature type="region of interest" description="Disordered" evidence="3">
    <location>
        <begin position="1"/>
        <end position="48"/>
    </location>
</feature>
<feature type="region of interest" description="Disordered" evidence="3">
    <location>
        <begin position="547"/>
        <end position="566"/>
    </location>
</feature>
<feature type="region of interest" description="Disordered" evidence="3">
    <location>
        <begin position="732"/>
        <end position="822"/>
    </location>
</feature>
<feature type="region of interest" description="Disordered" evidence="3">
    <location>
        <begin position="854"/>
        <end position="982"/>
    </location>
</feature>
<feature type="region of interest" description="Disordered" evidence="3">
    <location>
        <begin position="1425"/>
        <end position="1483"/>
    </location>
</feature>
<feature type="region of interest" description="Disordered" evidence="3">
    <location>
        <begin position="1825"/>
        <end position="1845"/>
    </location>
</feature>
<feature type="compositionally biased region" description="Basic residues" evidence="3">
    <location>
        <begin position="1"/>
        <end position="12"/>
    </location>
</feature>
<feature type="compositionally biased region" description="Polar residues" evidence="3">
    <location>
        <begin position="24"/>
        <end position="33"/>
    </location>
</feature>
<feature type="compositionally biased region" description="Basic and acidic residues" evidence="3">
    <location>
        <begin position="34"/>
        <end position="47"/>
    </location>
</feature>
<feature type="compositionally biased region" description="Basic residues" evidence="3">
    <location>
        <begin position="732"/>
        <end position="743"/>
    </location>
</feature>
<feature type="compositionally biased region" description="Basic and acidic residues" evidence="3">
    <location>
        <begin position="755"/>
        <end position="772"/>
    </location>
</feature>
<feature type="compositionally biased region" description="Low complexity" evidence="3">
    <location>
        <begin position="801"/>
        <end position="822"/>
    </location>
</feature>
<feature type="compositionally biased region" description="Low complexity" evidence="3">
    <location>
        <begin position="874"/>
        <end position="886"/>
    </location>
</feature>
<feature type="compositionally biased region" description="Polar residues" evidence="3">
    <location>
        <begin position="969"/>
        <end position="982"/>
    </location>
</feature>
<name>IML1_ASPCL</name>
<keyword id="KW-0472">Membrane</keyword>
<keyword id="KW-1185">Reference proteome</keyword>
<keyword id="KW-0926">Vacuole</keyword>
<gene>
    <name type="primary">iml1</name>
    <name type="ORF">ACLA_089310</name>
</gene>
<accession>A1CEE0</accession>
<comment type="subcellular location">
    <subcellularLocation>
        <location evidence="1">Vacuole membrane</location>
        <topology evidence="1">Peripheral membrane protein</topology>
    </subcellularLocation>
</comment>
<comment type="similarity">
    <text evidence="4">Belongs to the IML1 family.</text>
</comment>